<accession>Q0AF70</accession>
<name>RNC_NITEC</name>
<keyword id="KW-0963">Cytoplasm</keyword>
<keyword id="KW-0255">Endonuclease</keyword>
<keyword id="KW-0378">Hydrolase</keyword>
<keyword id="KW-0460">Magnesium</keyword>
<keyword id="KW-0479">Metal-binding</keyword>
<keyword id="KW-0507">mRNA processing</keyword>
<keyword id="KW-0540">Nuclease</keyword>
<keyword id="KW-0694">RNA-binding</keyword>
<keyword id="KW-0698">rRNA processing</keyword>
<keyword id="KW-0699">rRNA-binding</keyword>
<keyword id="KW-0819">tRNA processing</keyword>
<evidence type="ECO:0000255" key="1">
    <source>
        <dbReference type="HAMAP-Rule" id="MF_00104"/>
    </source>
</evidence>
<gene>
    <name evidence="1" type="primary">rnc</name>
    <name type="ordered locus">Neut_1778</name>
</gene>
<reference key="1">
    <citation type="journal article" date="2007" name="Environ. Microbiol.">
        <title>Whole-genome analysis of the ammonia-oxidizing bacterium, Nitrosomonas eutropha C91: implications for niche adaptation.</title>
        <authorList>
            <person name="Stein L.Y."/>
            <person name="Arp D.J."/>
            <person name="Berube P.M."/>
            <person name="Chain P.S."/>
            <person name="Hauser L."/>
            <person name="Jetten M.S."/>
            <person name="Klotz M.G."/>
            <person name="Larimer F.W."/>
            <person name="Norton J.M."/>
            <person name="Op den Camp H.J.M."/>
            <person name="Shin M."/>
            <person name="Wei X."/>
        </authorList>
    </citation>
    <scope>NUCLEOTIDE SEQUENCE [LARGE SCALE GENOMIC DNA]</scope>
    <source>
        <strain>DSM 101675 / C91 / Nm57</strain>
    </source>
</reference>
<protein>
    <recommendedName>
        <fullName evidence="1">Ribonuclease 3</fullName>
        <ecNumber evidence="1">3.1.26.3</ecNumber>
    </recommendedName>
    <alternativeName>
        <fullName evidence="1">Ribonuclease III</fullName>
        <shortName evidence="1">RNase III</shortName>
    </alternativeName>
</protein>
<comment type="function">
    <text evidence="1">Digests double-stranded RNA. Involved in the processing of primary rRNA transcript to yield the immediate precursors to the large and small rRNAs (23S and 16S). Processes some mRNAs, and tRNAs when they are encoded in the rRNA operon. Processes pre-crRNA and tracrRNA of type II CRISPR loci if present in the organism.</text>
</comment>
<comment type="catalytic activity">
    <reaction evidence="1">
        <text>Endonucleolytic cleavage to 5'-phosphomonoester.</text>
        <dbReference type="EC" id="3.1.26.3"/>
    </reaction>
</comment>
<comment type="cofactor">
    <cofactor evidence="1">
        <name>Mg(2+)</name>
        <dbReference type="ChEBI" id="CHEBI:18420"/>
    </cofactor>
</comment>
<comment type="subunit">
    <text evidence="1">Homodimer.</text>
</comment>
<comment type="subcellular location">
    <subcellularLocation>
        <location evidence="1">Cytoplasm</location>
    </subcellularLocation>
</comment>
<comment type="similarity">
    <text evidence="1">Belongs to the ribonuclease III family.</text>
</comment>
<sequence>MTRSKFTSQGIKSKHAKKLKKQDYTVFSQKLGYTFKQPDLLQEALTHRSLGFPNNERLEFLGDSVLNCAVSTLLFKRFLLLPEGDLTRLRANFVNQDALHQLASALGIGELILLGDGERKSGGHQRPSILANAMEAIIGAIYLESGFEKVDQVIVALYDPLLNQLDPDLFGKDPKTLLQEYLQSRKVDLPEYSTLLTRGDAHAQVFHVECVIPEFAIRTSGEGTSRRRAEQEAARRAYKLAVVRH</sequence>
<proteinExistence type="inferred from homology"/>
<organism>
    <name type="scientific">Nitrosomonas eutropha (strain DSM 101675 / C91 / Nm57)</name>
    <dbReference type="NCBI Taxonomy" id="335283"/>
    <lineage>
        <taxon>Bacteria</taxon>
        <taxon>Pseudomonadati</taxon>
        <taxon>Pseudomonadota</taxon>
        <taxon>Betaproteobacteria</taxon>
        <taxon>Nitrosomonadales</taxon>
        <taxon>Nitrosomonadaceae</taxon>
        <taxon>Nitrosomonas</taxon>
    </lineage>
</organism>
<feature type="chain" id="PRO_1000075781" description="Ribonuclease 3">
    <location>
        <begin position="1"/>
        <end position="245"/>
    </location>
</feature>
<feature type="domain" description="RNase III" evidence="1">
    <location>
        <begin position="24"/>
        <end position="146"/>
    </location>
</feature>
<feature type="domain" description="DRBM" evidence="1">
    <location>
        <begin position="173"/>
        <end position="243"/>
    </location>
</feature>
<feature type="active site" evidence="1">
    <location>
        <position position="63"/>
    </location>
</feature>
<feature type="active site" evidence="1">
    <location>
        <position position="135"/>
    </location>
</feature>
<feature type="binding site" evidence="1">
    <location>
        <position position="59"/>
    </location>
    <ligand>
        <name>Mg(2+)</name>
        <dbReference type="ChEBI" id="CHEBI:18420"/>
    </ligand>
</feature>
<feature type="binding site" evidence="1">
    <location>
        <position position="132"/>
    </location>
    <ligand>
        <name>Mg(2+)</name>
        <dbReference type="ChEBI" id="CHEBI:18420"/>
    </ligand>
</feature>
<feature type="binding site" evidence="1">
    <location>
        <position position="135"/>
    </location>
    <ligand>
        <name>Mg(2+)</name>
        <dbReference type="ChEBI" id="CHEBI:18420"/>
    </ligand>
</feature>
<dbReference type="EC" id="3.1.26.3" evidence="1"/>
<dbReference type="EMBL" id="CP000450">
    <property type="protein sequence ID" value="ABI60012.1"/>
    <property type="molecule type" value="Genomic_DNA"/>
</dbReference>
<dbReference type="RefSeq" id="WP_011634818.1">
    <property type="nucleotide sequence ID" value="NC_008344.1"/>
</dbReference>
<dbReference type="SMR" id="Q0AF70"/>
<dbReference type="STRING" id="335283.Neut_1778"/>
<dbReference type="KEGG" id="net:Neut_1778"/>
<dbReference type="eggNOG" id="COG0571">
    <property type="taxonomic scope" value="Bacteria"/>
</dbReference>
<dbReference type="HOGENOM" id="CLU_000907_1_1_4"/>
<dbReference type="OrthoDB" id="9805026at2"/>
<dbReference type="Proteomes" id="UP000001966">
    <property type="component" value="Chromosome"/>
</dbReference>
<dbReference type="GO" id="GO:0005737">
    <property type="term" value="C:cytoplasm"/>
    <property type="evidence" value="ECO:0007669"/>
    <property type="project" value="UniProtKB-SubCell"/>
</dbReference>
<dbReference type="GO" id="GO:0003725">
    <property type="term" value="F:double-stranded RNA binding"/>
    <property type="evidence" value="ECO:0007669"/>
    <property type="project" value="TreeGrafter"/>
</dbReference>
<dbReference type="GO" id="GO:0046872">
    <property type="term" value="F:metal ion binding"/>
    <property type="evidence" value="ECO:0007669"/>
    <property type="project" value="UniProtKB-KW"/>
</dbReference>
<dbReference type="GO" id="GO:0004525">
    <property type="term" value="F:ribonuclease III activity"/>
    <property type="evidence" value="ECO:0007669"/>
    <property type="project" value="UniProtKB-UniRule"/>
</dbReference>
<dbReference type="GO" id="GO:0019843">
    <property type="term" value="F:rRNA binding"/>
    <property type="evidence" value="ECO:0007669"/>
    <property type="project" value="UniProtKB-KW"/>
</dbReference>
<dbReference type="GO" id="GO:0006397">
    <property type="term" value="P:mRNA processing"/>
    <property type="evidence" value="ECO:0007669"/>
    <property type="project" value="UniProtKB-UniRule"/>
</dbReference>
<dbReference type="GO" id="GO:0010468">
    <property type="term" value="P:regulation of gene expression"/>
    <property type="evidence" value="ECO:0007669"/>
    <property type="project" value="TreeGrafter"/>
</dbReference>
<dbReference type="GO" id="GO:0006364">
    <property type="term" value="P:rRNA processing"/>
    <property type="evidence" value="ECO:0007669"/>
    <property type="project" value="UniProtKB-UniRule"/>
</dbReference>
<dbReference type="GO" id="GO:0008033">
    <property type="term" value="P:tRNA processing"/>
    <property type="evidence" value="ECO:0007669"/>
    <property type="project" value="UniProtKB-KW"/>
</dbReference>
<dbReference type="CDD" id="cd10845">
    <property type="entry name" value="DSRM_RNAse_III_family"/>
    <property type="match status" value="1"/>
</dbReference>
<dbReference type="CDD" id="cd00593">
    <property type="entry name" value="RIBOc"/>
    <property type="match status" value="1"/>
</dbReference>
<dbReference type="FunFam" id="1.10.1520.10:FF:000001">
    <property type="entry name" value="Ribonuclease 3"/>
    <property type="match status" value="1"/>
</dbReference>
<dbReference type="FunFam" id="3.30.160.20:FF:000003">
    <property type="entry name" value="Ribonuclease 3"/>
    <property type="match status" value="1"/>
</dbReference>
<dbReference type="Gene3D" id="3.30.160.20">
    <property type="match status" value="1"/>
</dbReference>
<dbReference type="Gene3D" id="1.10.1520.10">
    <property type="entry name" value="Ribonuclease III domain"/>
    <property type="match status" value="1"/>
</dbReference>
<dbReference type="HAMAP" id="MF_00104">
    <property type="entry name" value="RNase_III"/>
    <property type="match status" value="1"/>
</dbReference>
<dbReference type="InterPro" id="IPR014720">
    <property type="entry name" value="dsRBD_dom"/>
</dbReference>
<dbReference type="InterPro" id="IPR011907">
    <property type="entry name" value="RNase_III"/>
</dbReference>
<dbReference type="InterPro" id="IPR000999">
    <property type="entry name" value="RNase_III_dom"/>
</dbReference>
<dbReference type="InterPro" id="IPR036389">
    <property type="entry name" value="RNase_III_sf"/>
</dbReference>
<dbReference type="NCBIfam" id="TIGR02191">
    <property type="entry name" value="RNaseIII"/>
    <property type="match status" value="1"/>
</dbReference>
<dbReference type="PANTHER" id="PTHR11207:SF0">
    <property type="entry name" value="RIBONUCLEASE 3"/>
    <property type="match status" value="1"/>
</dbReference>
<dbReference type="PANTHER" id="PTHR11207">
    <property type="entry name" value="RIBONUCLEASE III"/>
    <property type="match status" value="1"/>
</dbReference>
<dbReference type="Pfam" id="PF00035">
    <property type="entry name" value="dsrm"/>
    <property type="match status" value="1"/>
</dbReference>
<dbReference type="Pfam" id="PF14622">
    <property type="entry name" value="Ribonucleas_3_3"/>
    <property type="match status" value="1"/>
</dbReference>
<dbReference type="SMART" id="SM00358">
    <property type="entry name" value="DSRM"/>
    <property type="match status" value="1"/>
</dbReference>
<dbReference type="SMART" id="SM00535">
    <property type="entry name" value="RIBOc"/>
    <property type="match status" value="1"/>
</dbReference>
<dbReference type="SUPFAM" id="SSF54768">
    <property type="entry name" value="dsRNA-binding domain-like"/>
    <property type="match status" value="1"/>
</dbReference>
<dbReference type="SUPFAM" id="SSF69065">
    <property type="entry name" value="RNase III domain-like"/>
    <property type="match status" value="1"/>
</dbReference>
<dbReference type="PROSITE" id="PS50137">
    <property type="entry name" value="DS_RBD"/>
    <property type="match status" value="1"/>
</dbReference>
<dbReference type="PROSITE" id="PS00517">
    <property type="entry name" value="RNASE_3_1"/>
    <property type="match status" value="1"/>
</dbReference>
<dbReference type="PROSITE" id="PS50142">
    <property type="entry name" value="RNASE_3_2"/>
    <property type="match status" value="1"/>
</dbReference>